<comment type="function">
    <text evidence="1">Splits dipeptides with a prolyl residue in the C-terminal position.</text>
</comment>
<comment type="catalytic activity">
    <reaction evidence="1">
        <text>Xaa-L-Pro dipeptide + H2O = an L-alpha-amino acid + L-proline</text>
        <dbReference type="Rhea" id="RHEA:76407"/>
        <dbReference type="ChEBI" id="CHEBI:15377"/>
        <dbReference type="ChEBI" id="CHEBI:59869"/>
        <dbReference type="ChEBI" id="CHEBI:60039"/>
        <dbReference type="ChEBI" id="CHEBI:195196"/>
        <dbReference type="EC" id="3.4.13.9"/>
    </reaction>
</comment>
<comment type="cofactor">
    <cofactor evidence="1">
        <name>Mn(2+)</name>
        <dbReference type="ChEBI" id="CHEBI:29035"/>
    </cofactor>
    <text evidence="1">Binds 2 manganese ions per subunit.</text>
</comment>
<comment type="similarity">
    <text evidence="1">Belongs to the peptidase M24B family. Bacterial-type prolidase subfamily.</text>
</comment>
<name>PEPQ_SHIFL</name>
<accession>Q83PG0</accession>
<accession>Q7UB58</accession>
<reference key="1">
    <citation type="journal article" date="2002" name="Nucleic Acids Res.">
        <title>Genome sequence of Shigella flexneri 2a: insights into pathogenicity through comparison with genomes of Escherichia coli K12 and O157.</title>
        <authorList>
            <person name="Jin Q."/>
            <person name="Yuan Z."/>
            <person name="Xu J."/>
            <person name="Wang Y."/>
            <person name="Shen Y."/>
            <person name="Lu W."/>
            <person name="Wang J."/>
            <person name="Liu H."/>
            <person name="Yang J."/>
            <person name="Yang F."/>
            <person name="Zhang X."/>
            <person name="Zhang J."/>
            <person name="Yang G."/>
            <person name="Wu H."/>
            <person name="Qu D."/>
            <person name="Dong J."/>
            <person name="Sun L."/>
            <person name="Xue Y."/>
            <person name="Zhao A."/>
            <person name="Gao Y."/>
            <person name="Zhu J."/>
            <person name="Kan B."/>
            <person name="Ding K."/>
            <person name="Chen S."/>
            <person name="Cheng H."/>
            <person name="Yao Z."/>
            <person name="He B."/>
            <person name="Chen R."/>
            <person name="Ma D."/>
            <person name="Qiang B."/>
            <person name="Wen Y."/>
            <person name="Hou Y."/>
            <person name="Yu J."/>
        </authorList>
    </citation>
    <scope>NUCLEOTIDE SEQUENCE [LARGE SCALE GENOMIC DNA]</scope>
    <source>
        <strain>301 / Serotype 2a</strain>
    </source>
</reference>
<reference key="2">
    <citation type="journal article" date="2003" name="Infect. Immun.">
        <title>Complete genome sequence and comparative genomics of Shigella flexneri serotype 2a strain 2457T.</title>
        <authorList>
            <person name="Wei J."/>
            <person name="Goldberg M.B."/>
            <person name="Burland V."/>
            <person name="Venkatesan M.M."/>
            <person name="Deng W."/>
            <person name="Fournier G."/>
            <person name="Mayhew G.F."/>
            <person name="Plunkett G. III"/>
            <person name="Rose D.J."/>
            <person name="Darling A."/>
            <person name="Mau B."/>
            <person name="Perna N.T."/>
            <person name="Payne S.M."/>
            <person name="Runyen-Janecky L.J."/>
            <person name="Zhou S."/>
            <person name="Schwartz D.C."/>
            <person name="Blattner F.R."/>
        </authorList>
    </citation>
    <scope>NUCLEOTIDE SEQUENCE [LARGE SCALE GENOMIC DNA]</scope>
    <source>
        <strain>ATCC 700930 / 2457T / Serotype 2a</strain>
    </source>
</reference>
<proteinExistence type="inferred from homology"/>
<dbReference type="EC" id="3.4.13.9" evidence="1"/>
<dbReference type="EMBL" id="AE005674">
    <property type="protein sequence ID" value="AAN45358.1"/>
    <property type="molecule type" value="Genomic_DNA"/>
</dbReference>
<dbReference type="EMBL" id="AE014073">
    <property type="protein sequence ID" value="AAP18840.1"/>
    <property type="molecule type" value="Genomic_DNA"/>
</dbReference>
<dbReference type="RefSeq" id="NP_709651.1">
    <property type="nucleotide sequence ID" value="NC_004337.2"/>
</dbReference>
<dbReference type="RefSeq" id="WP_000444563.1">
    <property type="nucleotide sequence ID" value="NZ_WPGW01000036.1"/>
</dbReference>
<dbReference type="SMR" id="Q83PG0"/>
<dbReference type="STRING" id="198214.SF3923"/>
<dbReference type="MEROPS" id="M24.003"/>
<dbReference type="PaxDb" id="198214-SF3923"/>
<dbReference type="GeneID" id="1024129"/>
<dbReference type="KEGG" id="sfl:SF3923"/>
<dbReference type="KEGG" id="sfx:S3829"/>
<dbReference type="PATRIC" id="fig|198214.7.peg.4623"/>
<dbReference type="HOGENOM" id="CLU_050675_0_0_6"/>
<dbReference type="Proteomes" id="UP000001006">
    <property type="component" value="Chromosome"/>
</dbReference>
<dbReference type="Proteomes" id="UP000002673">
    <property type="component" value="Chromosome"/>
</dbReference>
<dbReference type="GO" id="GO:0005829">
    <property type="term" value="C:cytosol"/>
    <property type="evidence" value="ECO:0007669"/>
    <property type="project" value="TreeGrafter"/>
</dbReference>
<dbReference type="GO" id="GO:0004177">
    <property type="term" value="F:aminopeptidase activity"/>
    <property type="evidence" value="ECO:0007669"/>
    <property type="project" value="TreeGrafter"/>
</dbReference>
<dbReference type="GO" id="GO:0046872">
    <property type="term" value="F:metal ion binding"/>
    <property type="evidence" value="ECO:0007669"/>
    <property type="project" value="UniProtKB-KW"/>
</dbReference>
<dbReference type="GO" id="GO:0008235">
    <property type="term" value="F:metalloexopeptidase activity"/>
    <property type="evidence" value="ECO:0007669"/>
    <property type="project" value="UniProtKB-UniRule"/>
</dbReference>
<dbReference type="GO" id="GO:0016795">
    <property type="term" value="F:phosphoric triester hydrolase activity"/>
    <property type="evidence" value="ECO:0007669"/>
    <property type="project" value="InterPro"/>
</dbReference>
<dbReference type="GO" id="GO:0102009">
    <property type="term" value="F:proline dipeptidase activity"/>
    <property type="evidence" value="ECO:0007669"/>
    <property type="project" value="UniProtKB-EC"/>
</dbReference>
<dbReference type="GO" id="GO:0006508">
    <property type="term" value="P:proteolysis"/>
    <property type="evidence" value="ECO:0007669"/>
    <property type="project" value="UniProtKB-KW"/>
</dbReference>
<dbReference type="CDD" id="cd01087">
    <property type="entry name" value="Prolidase"/>
    <property type="match status" value="1"/>
</dbReference>
<dbReference type="FunFam" id="3.40.350.10:FF:000002">
    <property type="entry name" value="Xaa-Pro dipeptidase"/>
    <property type="match status" value="1"/>
</dbReference>
<dbReference type="FunFam" id="3.90.230.10:FF:000006">
    <property type="entry name" value="Xaa-Pro dipeptidase"/>
    <property type="match status" value="1"/>
</dbReference>
<dbReference type="Gene3D" id="3.90.230.10">
    <property type="entry name" value="Creatinase/methionine aminopeptidase superfamily"/>
    <property type="match status" value="1"/>
</dbReference>
<dbReference type="Gene3D" id="3.40.350.10">
    <property type="entry name" value="Creatinase/prolidase N-terminal domain"/>
    <property type="match status" value="1"/>
</dbReference>
<dbReference type="HAMAP" id="MF_01279">
    <property type="entry name" value="X_Pro_dipeptid"/>
    <property type="match status" value="1"/>
</dbReference>
<dbReference type="InterPro" id="IPR029149">
    <property type="entry name" value="Creatin/AminoP/Spt16_N"/>
</dbReference>
<dbReference type="InterPro" id="IPR036005">
    <property type="entry name" value="Creatinase/aminopeptidase-like"/>
</dbReference>
<dbReference type="InterPro" id="IPR048819">
    <property type="entry name" value="PepQ_N"/>
</dbReference>
<dbReference type="InterPro" id="IPR000994">
    <property type="entry name" value="Pept_M24"/>
</dbReference>
<dbReference type="InterPro" id="IPR001131">
    <property type="entry name" value="Peptidase_M24B_aminopep-P_CS"/>
</dbReference>
<dbReference type="InterPro" id="IPR052433">
    <property type="entry name" value="X-Pro_dipept-like"/>
</dbReference>
<dbReference type="InterPro" id="IPR022846">
    <property type="entry name" value="X_Pro_dipept"/>
</dbReference>
<dbReference type="NCBIfam" id="NF010133">
    <property type="entry name" value="PRK13607.1"/>
    <property type="match status" value="1"/>
</dbReference>
<dbReference type="PANTHER" id="PTHR43226">
    <property type="entry name" value="XAA-PRO AMINOPEPTIDASE 3"/>
    <property type="match status" value="1"/>
</dbReference>
<dbReference type="PANTHER" id="PTHR43226:SF8">
    <property type="entry name" value="XAA-PRO DIPEPTIDASE"/>
    <property type="match status" value="1"/>
</dbReference>
<dbReference type="Pfam" id="PF21216">
    <property type="entry name" value="PepQ_N"/>
    <property type="match status" value="1"/>
</dbReference>
<dbReference type="Pfam" id="PF00557">
    <property type="entry name" value="Peptidase_M24"/>
    <property type="match status" value="1"/>
</dbReference>
<dbReference type="SUPFAM" id="SSF55920">
    <property type="entry name" value="Creatinase/aminopeptidase"/>
    <property type="match status" value="1"/>
</dbReference>
<dbReference type="PROSITE" id="PS00491">
    <property type="entry name" value="PROLINE_PEPTIDASE"/>
    <property type="match status" value="1"/>
</dbReference>
<protein>
    <recommendedName>
        <fullName evidence="1">Xaa-Pro dipeptidase</fullName>
        <shortName evidence="1">X-Pro dipeptidase</shortName>
        <ecNumber evidence="1">3.4.13.9</ecNumber>
    </recommendedName>
    <alternativeName>
        <fullName evidence="1">Imidodipeptidase</fullName>
    </alternativeName>
    <alternativeName>
        <fullName evidence="1">Proline dipeptidase</fullName>
        <shortName evidence="1">Prolidase</shortName>
    </alternativeName>
</protein>
<sequence>MESLASLYKNHIATLQERTRDALARFKLDALLIHSGELFNVFLDDHPYPFKVNPQFKAWVPVTQVPNCWLLVDGVNKPKLWFYLPVDYWHNVEPLPTSFWTEDVEVIALPKADGIGSLLPAARGNIGYIGPVPERALQLGIEASNINPKGVIDYLHYYRSFKTEYELACMREAQKMAVNGHRAAEEAFRSGMSEFDINIAYLTATGHRDTDVPYSNIVALNEHAAVLHYTKLDHQAPEEMRSFLLDAGAEYNGYAADLTRTWSAKSDNDYAQLVKDVNDEQLALIATMKAGVSYVDYHIQFHQRIAKLLRKHQIITDMSEEAMVENDLTGPFMPHGIGHPLGLQVHDVAGFMQDDSGTHLAAPAKYPYLRYTRILQPGMVLTIEPGIYFIESLLAPWREGQFSKHFNWQKIEALKPFGGIRIEDNVVIHENNVENMTRDLKLA</sequence>
<evidence type="ECO:0000255" key="1">
    <source>
        <dbReference type="HAMAP-Rule" id="MF_01279"/>
    </source>
</evidence>
<evidence type="ECO:0000305" key="2"/>
<feature type="chain" id="PRO_0000303868" description="Xaa-Pro dipeptidase">
    <location>
        <begin position="1"/>
        <end position="443"/>
    </location>
</feature>
<feature type="binding site" evidence="1">
    <location>
        <position position="246"/>
    </location>
    <ligand>
        <name>Mn(2+)</name>
        <dbReference type="ChEBI" id="CHEBI:29035"/>
        <label>2</label>
    </ligand>
</feature>
<feature type="binding site" evidence="1">
    <location>
        <position position="257"/>
    </location>
    <ligand>
        <name>Mn(2+)</name>
        <dbReference type="ChEBI" id="CHEBI:29035"/>
        <label>1</label>
    </ligand>
</feature>
<feature type="binding site" evidence="1">
    <location>
        <position position="257"/>
    </location>
    <ligand>
        <name>Mn(2+)</name>
        <dbReference type="ChEBI" id="CHEBI:29035"/>
        <label>2</label>
    </ligand>
</feature>
<feature type="binding site" evidence="1">
    <location>
        <position position="339"/>
    </location>
    <ligand>
        <name>Mn(2+)</name>
        <dbReference type="ChEBI" id="CHEBI:29035"/>
        <label>1</label>
    </ligand>
</feature>
<feature type="binding site" evidence="1">
    <location>
        <position position="384"/>
    </location>
    <ligand>
        <name>Mn(2+)</name>
        <dbReference type="ChEBI" id="CHEBI:29035"/>
        <label>1</label>
    </ligand>
</feature>
<feature type="binding site" evidence="1">
    <location>
        <position position="423"/>
    </location>
    <ligand>
        <name>Mn(2+)</name>
        <dbReference type="ChEBI" id="CHEBI:29035"/>
        <label>1</label>
    </ligand>
</feature>
<feature type="binding site" evidence="1">
    <location>
        <position position="423"/>
    </location>
    <ligand>
        <name>Mn(2+)</name>
        <dbReference type="ChEBI" id="CHEBI:29035"/>
        <label>2</label>
    </ligand>
</feature>
<feature type="sequence conflict" description="In Ref. 2; AAP18840." evidence="2" ref="2">
    <original>L</original>
    <variation>Q</variation>
    <location>
        <position position="155"/>
    </location>
</feature>
<keyword id="KW-0224">Dipeptidase</keyword>
<keyword id="KW-0378">Hydrolase</keyword>
<keyword id="KW-0464">Manganese</keyword>
<keyword id="KW-0479">Metal-binding</keyword>
<keyword id="KW-0482">Metalloprotease</keyword>
<keyword id="KW-0645">Protease</keyword>
<keyword id="KW-1185">Reference proteome</keyword>
<organism>
    <name type="scientific">Shigella flexneri</name>
    <dbReference type="NCBI Taxonomy" id="623"/>
    <lineage>
        <taxon>Bacteria</taxon>
        <taxon>Pseudomonadati</taxon>
        <taxon>Pseudomonadota</taxon>
        <taxon>Gammaproteobacteria</taxon>
        <taxon>Enterobacterales</taxon>
        <taxon>Enterobacteriaceae</taxon>
        <taxon>Shigella</taxon>
    </lineage>
</organism>
<gene>
    <name evidence="1" type="primary">pepQ</name>
    <name type="ordered locus">SF3923</name>
    <name type="ordered locus">S3829</name>
</gene>